<name>TM231_CHICK</name>
<dbReference type="EMBL" id="AADN02054203">
    <property type="status" value="NOT_ANNOTATED_CDS"/>
    <property type="molecule type" value="Genomic_DNA"/>
</dbReference>
<dbReference type="RefSeq" id="NP_001292078.1">
    <property type="nucleotide sequence ID" value="NM_001305149.2"/>
</dbReference>
<dbReference type="FunCoup" id="F1NNL1">
    <property type="interactions" value="382"/>
</dbReference>
<dbReference type="STRING" id="9031.ENSGALP00000058774"/>
<dbReference type="GlyCosmos" id="F1NNL1">
    <property type="glycosylation" value="3 sites, No reported glycans"/>
</dbReference>
<dbReference type="GlyGen" id="F1NNL1">
    <property type="glycosylation" value="3 sites"/>
</dbReference>
<dbReference type="PaxDb" id="9031-ENSGALP00000005089"/>
<dbReference type="Ensembl" id="ENSGALT00010021446.1">
    <property type="protein sequence ID" value="ENSGALP00010012219.1"/>
    <property type="gene ID" value="ENSGALG00010009015.1"/>
</dbReference>
<dbReference type="GeneID" id="425108"/>
<dbReference type="KEGG" id="gga:425108"/>
<dbReference type="CTD" id="79583"/>
<dbReference type="VEuPathDB" id="HostDB:geneid_425108"/>
<dbReference type="eggNOG" id="KOG4838">
    <property type="taxonomic scope" value="Eukaryota"/>
</dbReference>
<dbReference type="GeneTree" id="ENSGT00390000015366"/>
<dbReference type="HOGENOM" id="CLU_070969_0_0_1"/>
<dbReference type="InParanoid" id="F1NNL1"/>
<dbReference type="OMA" id="PALYTRY"/>
<dbReference type="OrthoDB" id="426438at2759"/>
<dbReference type="PRO" id="PR:F1NNL1"/>
<dbReference type="Proteomes" id="UP000000539">
    <property type="component" value="Chromosome 11"/>
</dbReference>
<dbReference type="Bgee" id="ENSGALG00000003219">
    <property type="expression patterns" value="Expressed in kidney and 13 other cell types or tissues"/>
</dbReference>
<dbReference type="GO" id="GO:0060170">
    <property type="term" value="C:ciliary membrane"/>
    <property type="evidence" value="ECO:0000250"/>
    <property type="project" value="UniProtKB"/>
</dbReference>
<dbReference type="GO" id="GO:0035869">
    <property type="term" value="C:ciliary transition zone"/>
    <property type="evidence" value="ECO:0000250"/>
    <property type="project" value="UniProtKB"/>
</dbReference>
<dbReference type="GO" id="GO:0036038">
    <property type="term" value="C:MKS complex"/>
    <property type="evidence" value="ECO:0000250"/>
    <property type="project" value="UniProtKB"/>
</dbReference>
<dbReference type="GO" id="GO:0043010">
    <property type="term" value="P:camera-type eye development"/>
    <property type="evidence" value="ECO:0007669"/>
    <property type="project" value="Ensembl"/>
</dbReference>
<dbReference type="GO" id="GO:0060271">
    <property type="term" value="P:cilium assembly"/>
    <property type="evidence" value="ECO:0000250"/>
    <property type="project" value="UniProtKB"/>
</dbReference>
<dbReference type="GO" id="GO:0042733">
    <property type="term" value="P:embryonic digit morphogenesis"/>
    <property type="evidence" value="ECO:0007669"/>
    <property type="project" value="Ensembl"/>
</dbReference>
<dbReference type="GO" id="GO:0060563">
    <property type="term" value="P:neuroepithelial cell differentiation"/>
    <property type="evidence" value="ECO:0007669"/>
    <property type="project" value="Ensembl"/>
</dbReference>
<dbReference type="GO" id="GO:0032880">
    <property type="term" value="P:regulation of protein localization"/>
    <property type="evidence" value="ECO:0000318"/>
    <property type="project" value="GO_Central"/>
</dbReference>
<dbReference type="GO" id="GO:0007224">
    <property type="term" value="P:smoothened signaling pathway"/>
    <property type="evidence" value="ECO:0000250"/>
    <property type="project" value="UniProtKB"/>
</dbReference>
<dbReference type="GO" id="GO:0001944">
    <property type="term" value="P:vasculature development"/>
    <property type="evidence" value="ECO:0007669"/>
    <property type="project" value="Ensembl"/>
</dbReference>
<dbReference type="InterPro" id="IPR019306">
    <property type="entry name" value="TMEM231"/>
</dbReference>
<dbReference type="PANTHER" id="PTHR14605">
    <property type="entry name" value="CHST5 PROTEIN"/>
    <property type="match status" value="1"/>
</dbReference>
<dbReference type="PANTHER" id="PTHR14605:SF1">
    <property type="entry name" value="TRANSMEMBRANE PROTEIN 231"/>
    <property type="match status" value="1"/>
</dbReference>
<dbReference type="Pfam" id="PF10149">
    <property type="entry name" value="TM231"/>
    <property type="match status" value="1"/>
</dbReference>
<feature type="chain" id="PRO_0000415840" description="Transmembrane protein 231">
    <location>
        <begin position="1"/>
        <end position="320"/>
    </location>
</feature>
<feature type="transmembrane region" description="Helical" evidence="2">
    <location>
        <begin position="23"/>
        <end position="43"/>
    </location>
</feature>
<feature type="transmembrane region" description="Helical" evidence="2">
    <location>
        <begin position="266"/>
        <end position="286"/>
    </location>
</feature>
<feature type="glycosylation site" description="N-linked (GlcNAc...) asparagine" evidence="2">
    <location>
        <position position="195"/>
    </location>
</feature>
<feature type="glycosylation site" description="N-linked (GlcNAc...) asparagine" evidence="2">
    <location>
        <position position="200"/>
    </location>
</feature>
<feature type="glycosylation site" description="N-linked (GlcNAc...) asparagine" evidence="2">
    <location>
        <position position="222"/>
    </location>
</feature>
<protein>
    <recommendedName>
        <fullName>Transmembrane protein 231</fullName>
    </recommendedName>
</protein>
<evidence type="ECO:0000250" key="1"/>
<evidence type="ECO:0000255" key="2"/>
<evidence type="ECO:0000305" key="3"/>
<gene>
    <name type="primary">TMEM231</name>
</gene>
<organism>
    <name type="scientific">Gallus gallus</name>
    <name type="common">Chicken</name>
    <dbReference type="NCBI Taxonomy" id="9031"/>
    <lineage>
        <taxon>Eukaryota</taxon>
        <taxon>Metazoa</taxon>
        <taxon>Chordata</taxon>
        <taxon>Craniata</taxon>
        <taxon>Vertebrata</taxon>
        <taxon>Euteleostomi</taxon>
        <taxon>Archelosauria</taxon>
        <taxon>Archosauria</taxon>
        <taxon>Dinosauria</taxon>
        <taxon>Saurischia</taxon>
        <taxon>Theropoda</taxon>
        <taxon>Coelurosauria</taxon>
        <taxon>Aves</taxon>
        <taxon>Neognathae</taxon>
        <taxon>Galloanserae</taxon>
        <taxon>Galliformes</taxon>
        <taxon>Phasianidae</taxon>
        <taxon>Phasianinae</taxon>
        <taxon>Gallus</taxon>
    </lineage>
</organism>
<keyword id="KW-1003">Cell membrane</keyword>
<keyword id="KW-0966">Cell projection</keyword>
<keyword id="KW-0969">Cilium</keyword>
<keyword id="KW-0970">Cilium biogenesis/degradation</keyword>
<keyword id="KW-0325">Glycoprotein</keyword>
<keyword id="KW-0472">Membrane</keyword>
<keyword id="KW-1185">Reference proteome</keyword>
<keyword id="KW-0812">Transmembrane</keyword>
<keyword id="KW-1133">Transmembrane helix</keyword>
<comment type="function">
    <text evidence="1">Transmembrane component of the tectonic-like complex, a complex localized at the transition zone of primary cilia and acting as a barrier that prevents diffusion of transmembrane proteins between the cilia and plasma membranes. Required for ciliogenesis and sonic hedgehog/SHH signaling (By similarity).</text>
</comment>
<comment type="subunit">
    <text evidence="1">Part of the tectonic-like complex (also named B9 complex).</text>
</comment>
<comment type="subcellular location">
    <subcellularLocation>
        <location evidence="1">Cell projection</location>
        <location evidence="1">Cilium membrane</location>
        <topology evidence="1">Multi-pass membrane protein</topology>
    </subcellularLocation>
    <text evidence="1">Localizes to the transition zone of primary cilia; SEPT2 is required for localization to the transition zone.</text>
</comment>
<comment type="similarity">
    <text evidence="3">Belongs to the TMEM231 family.</text>
</comment>
<sequence length="320" mass="36527">MAGVELFSHPALHTRYRAGLCSAAALALLLIAVLTYVPPLLVAYRSHGFWLKQSAYREQPTVRFRYELLFVATTGPGPGSFLAWSTFPAFNRLQEDRLRVPLLSTREEDKNQDGKMDQLHFKLELPLQPTEHVVGVQLILIFSYQLYRMSTFVMQSMAFLQFFSPVPGSQLYANGDLKLNQRQLLNHCGLDTRYNVSVVNGTSPFASDYDLKNIIAAYRDRNVTTVFSDSNPIWMTGRGANTPFIVNATIRYPVEVILYQPGFWETIKFAWIQYVSILLIFLWVFGRIKMFVFQNQVFATTPVSPVLPLSPVLSYKQHQP</sequence>
<proteinExistence type="inferred from homology"/>
<reference key="1">
    <citation type="journal article" date="2004" name="Nature">
        <title>Sequence and comparative analysis of the chicken genome provide unique perspectives on vertebrate evolution.</title>
        <authorList>
            <person name="Hillier L.W."/>
            <person name="Miller W."/>
            <person name="Birney E."/>
            <person name="Warren W."/>
            <person name="Hardison R.C."/>
            <person name="Ponting C.P."/>
            <person name="Bork P."/>
            <person name="Burt D.W."/>
            <person name="Groenen M.A.M."/>
            <person name="Delany M.E."/>
            <person name="Dodgson J.B."/>
            <person name="Chinwalla A.T."/>
            <person name="Cliften P.F."/>
            <person name="Clifton S.W."/>
            <person name="Delehaunty K.D."/>
            <person name="Fronick C."/>
            <person name="Fulton R.S."/>
            <person name="Graves T.A."/>
            <person name="Kremitzki C."/>
            <person name="Layman D."/>
            <person name="Magrini V."/>
            <person name="McPherson J.D."/>
            <person name="Miner T.L."/>
            <person name="Minx P."/>
            <person name="Nash W.E."/>
            <person name="Nhan M.N."/>
            <person name="Nelson J.O."/>
            <person name="Oddy L.G."/>
            <person name="Pohl C.S."/>
            <person name="Randall-Maher J."/>
            <person name="Smith S.M."/>
            <person name="Wallis J.W."/>
            <person name="Yang S.-P."/>
            <person name="Romanov M.N."/>
            <person name="Rondelli C.M."/>
            <person name="Paton B."/>
            <person name="Smith J."/>
            <person name="Morrice D."/>
            <person name="Daniels L."/>
            <person name="Tempest H.G."/>
            <person name="Robertson L."/>
            <person name="Masabanda J.S."/>
            <person name="Griffin D.K."/>
            <person name="Vignal A."/>
            <person name="Fillon V."/>
            <person name="Jacobbson L."/>
            <person name="Kerje S."/>
            <person name="Andersson L."/>
            <person name="Crooijmans R.P."/>
            <person name="Aerts J."/>
            <person name="van der Poel J.J."/>
            <person name="Ellegren H."/>
            <person name="Caldwell R.B."/>
            <person name="Hubbard S.J."/>
            <person name="Grafham D.V."/>
            <person name="Kierzek A.M."/>
            <person name="McLaren S.R."/>
            <person name="Overton I.M."/>
            <person name="Arakawa H."/>
            <person name="Beattie K.J."/>
            <person name="Bezzubov Y."/>
            <person name="Boardman P.E."/>
            <person name="Bonfield J.K."/>
            <person name="Croning M.D.R."/>
            <person name="Davies R.M."/>
            <person name="Francis M.D."/>
            <person name="Humphray S.J."/>
            <person name="Scott C.E."/>
            <person name="Taylor R.G."/>
            <person name="Tickle C."/>
            <person name="Brown W.R.A."/>
            <person name="Rogers J."/>
            <person name="Buerstedde J.-M."/>
            <person name="Wilson S.A."/>
            <person name="Stubbs L."/>
            <person name="Ovcharenko I."/>
            <person name="Gordon L."/>
            <person name="Lucas S."/>
            <person name="Miller M.M."/>
            <person name="Inoko H."/>
            <person name="Shiina T."/>
            <person name="Kaufman J."/>
            <person name="Salomonsen J."/>
            <person name="Skjoedt K."/>
            <person name="Wong G.K.-S."/>
            <person name="Wang J."/>
            <person name="Liu B."/>
            <person name="Wang J."/>
            <person name="Yu J."/>
            <person name="Yang H."/>
            <person name="Nefedov M."/>
            <person name="Koriabine M."/>
            <person name="Dejong P.J."/>
            <person name="Goodstadt L."/>
            <person name="Webber C."/>
            <person name="Dickens N.J."/>
            <person name="Letunic I."/>
            <person name="Suyama M."/>
            <person name="Torrents D."/>
            <person name="von Mering C."/>
            <person name="Zdobnov E.M."/>
            <person name="Makova K."/>
            <person name="Nekrutenko A."/>
            <person name="Elnitski L."/>
            <person name="Eswara P."/>
            <person name="King D.C."/>
            <person name="Yang S.-P."/>
            <person name="Tyekucheva S."/>
            <person name="Radakrishnan A."/>
            <person name="Harris R.S."/>
            <person name="Chiaromonte F."/>
            <person name="Taylor J."/>
            <person name="He J."/>
            <person name="Rijnkels M."/>
            <person name="Griffiths-Jones S."/>
            <person name="Ureta-Vidal A."/>
            <person name="Hoffman M.M."/>
            <person name="Severin J."/>
            <person name="Searle S.M.J."/>
            <person name="Law A.S."/>
            <person name="Speed D."/>
            <person name="Waddington D."/>
            <person name="Cheng Z."/>
            <person name="Tuzun E."/>
            <person name="Eichler E."/>
            <person name="Bao Z."/>
            <person name="Flicek P."/>
            <person name="Shteynberg D.D."/>
            <person name="Brent M.R."/>
            <person name="Bye J.M."/>
            <person name="Huckle E.J."/>
            <person name="Chatterji S."/>
            <person name="Dewey C."/>
            <person name="Pachter L."/>
            <person name="Kouranov A."/>
            <person name="Mourelatos Z."/>
            <person name="Hatzigeorgiou A.G."/>
            <person name="Paterson A.H."/>
            <person name="Ivarie R."/>
            <person name="Brandstrom M."/>
            <person name="Axelsson E."/>
            <person name="Backstrom N."/>
            <person name="Berlin S."/>
            <person name="Webster M.T."/>
            <person name="Pourquie O."/>
            <person name="Reymond A."/>
            <person name="Ucla C."/>
            <person name="Antonarakis S.E."/>
            <person name="Long M."/>
            <person name="Emerson J.J."/>
            <person name="Betran E."/>
            <person name="Dupanloup I."/>
            <person name="Kaessmann H."/>
            <person name="Hinrichs A.S."/>
            <person name="Bejerano G."/>
            <person name="Furey T.S."/>
            <person name="Harte R.A."/>
            <person name="Raney B."/>
            <person name="Siepel A."/>
            <person name="Kent W.J."/>
            <person name="Haussler D."/>
            <person name="Eyras E."/>
            <person name="Castelo R."/>
            <person name="Abril J.F."/>
            <person name="Castellano S."/>
            <person name="Camara F."/>
            <person name="Parra G."/>
            <person name="Guigo R."/>
            <person name="Bourque G."/>
            <person name="Tesler G."/>
            <person name="Pevzner P.A."/>
            <person name="Smit A."/>
            <person name="Fulton L.A."/>
            <person name="Mardis E.R."/>
            <person name="Wilson R.K."/>
        </authorList>
    </citation>
    <scope>NUCLEOTIDE SEQUENCE [LARGE SCALE GENOMIC DNA]</scope>
    <source>
        <strain>Red jungle fowl</strain>
    </source>
</reference>
<accession>F1NNL1</accession>